<organism>
    <name type="scientific">Escherichia coli O139:H28 (strain E24377A / ETEC)</name>
    <dbReference type="NCBI Taxonomy" id="331111"/>
    <lineage>
        <taxon>Bacteria</taxon>
        <taxon>Pseudomonadati</taxon>
        <taxon>Pseudomonadota</taxon>
        <taxon>Gammaproteobacteria</taxon>
        <taxon>Enterobacterales</taxon>
        <taxon>Enterobacteriaceae</taxon>
        <taxon>Escherichia</taxon>
    </lineage>
</organism>
<feature type="chain" id="PRO_0000330508" description="Siroheme synthase">
    <location>
        <begin position="1"/>
        <end position="457"/>
    </location>
</feature>
<feature type="region of interest" description="Precorrin-2 dehydrogenase /sirohydrochlorin ferrochelatase" evidence="1">
    <location>
        <begin position="1"/>
        <end position="204"/>
    </location>
</feature>
<feature type="region of interest" description="Uroporphyrinogen-III C-methyltransferase" evidence="1">
    <location>
        <begin position="216"/>
        <end position="457"/>
    </location>
</feature>
<feature type="active site" description="Proton acceptor" evidence="1">
    <location>
        <position position="248"/>
    </location>
</feature>
<feature type="active site" description="Proton donor" evidence="1">
    <location>
        <position position="270"/>
    </location>
</feature>
<feature type="binding site" evidence="1">
    <location>
        <begin position="22"/>
        <end position="23"/>
    </location>
    <ligand>
        <name>NAD(+)</name>
        <dbReference type="ChEBI" id="CHEBI:57540"/>
    </ligand>
</feature>
<feature type="binding site" evidence="1">
    <location>
        <begin position="43"/>
        <end position="44"/>
    </location>
    <ligand>
        <name>NAD(+)</name>
        <dbReference type="ChEBI" id="CHEBI:57540"/>
    </ligand>
</feature>
<feature type="binding site" evidence="1">
    <location>
        <position position="225"/>
    </location>
    <ligand>
        <name>S-adenosyl-L-methionine</name>
        <dbReference type="ChEBI" id="CHEBI:59789"/>
    </ligand>
</feature>
<feature type="binding site" evidence="1">
    <location>
        <begin position="301"/>
        <end position="303"/>
    </location>
    <ligand>
        <name>S-adenosyl-L-methionine</name>
        <dbReference type="ChEBI" id="CHEBI:59789"/>
    </ligand>
</feature>
<feature type="binding site" evidence="1">
    <location>
        <position position="306"/>
    </location>
    <ligand>
        <name>S-adenosyl-L-methionine</name>
        <dbReference type="ChEBI" id="CHEBI:59789"/>
    </ligand>
</feature>
<feature type="binding site" evidence="1">
    <location>
        <begin position="331"/>
        <end position="332"/>
    </location>
    <ligand>
        <name>S-adenosyl-L-methionine</name>
        <dbReference type="ChEBI" id="CHEBI:59789"/>
    </ligand>
</feature>
<feature type="binding site" evidence="1">
    <location>
        <position position="382"/>
    </location>
    <ligand>
        <name>S-adenosyl-L-methionine</name>
        <dbReference type="ChEBI" id="CHEBI:59789"/>
    </ligand>
</feature>
<feature type="binding site" evidence="1">
    <location>
        <position position="411"/>
    </location>
    <ligand>
        <name>S-adenosyl-L-methionine</name>
        <dbReference type="ChEBI" id="CHEBI:59789"/>
    </ligand>
</feature>
<feature type="modified residue" description="Phosphoserine" evidence="1">
    <location>
        <position position="128"/>
    </location>
</feature>
<dbReference type="EC" id="2.1.1.107" evidence="1"/>
<dbReference type="EC" id="1.3.1.76" evidence="1"/>
<dbReference type="EC" id="4.99.1.4" evidence="1"/>
<dbReference type="EMBL" id="CP000800">
    <property type="protein sequence ID" value="ABV18821.1"/>
    <property type="molecule type" value="Genomic_DNA"/>
</dbReference>
<dbReference type="RefSeq" id="WP_000349863.1">
    <property type="nucleotide sequence ID" value="NC_009801.1"/>
</dbReference>
<dbReference type="SMR" id="A7ZSP4"/>
<dbReference type="GeneID" id="75206312"/>
<dbReference type="KEGG" id="ecw:EcE24377A_3838"/>
<dbReference type="HOGENOM" id="CLU_011276_2_0_6"/>
<dbReference type="UniPathway" id="UPA00148">
    <property type="reaction ID" value="UER00211"/>
</dbReference>
<dbReference type="UniPathway" id="UPA00148">
    <property type="reaction ID" value="UER00222"/>
</dbReference>
<dbReference type="UniPathway" id="UPA00262">
    <property type="reaction ID" value="UER00211"/>
</dbReference>
<dbReference type="UniPathway" id="UPA00262">
    <property type="reaction ID" value="UER00222"/>
</dbReference>
<dbReference type="UniPathway" id="UPA00262">
    <property type="reaction ID" value="UER00376"/>
</dbReference>
<dbReference type="Proteomes" id="UP000001122">
    <property type="component" value="Chromosome"/>
</dbReference>
<dbReference type="GO" id="GO:0051287">
    <property type="term" value="F:NAD binding"/>
    <property type="evidence" value="ECO:0007669"/>
    <property type="project" value="InterPro"/>
</dbReference>
<dbReference type="GO" id="GO:0043115">
    <property type="term" value="F:precorrin-2 dehydrogenase activity"/>
    <property type="evidence" value="ECO:0007669"/>
    <property type="project" value="UniProtKB-UniRule"/>
</dbReference>
<dbReference type="GO" id="GO:0051266">
    <property type="term" value="F:sirohydrochlorin ferrochelatase activity"/>
    <property type="evidence" value="ECO:0007669"/>
    <property type="project" value="UniProtKB-EC"/>
</dbReference>
<dbReference type="GO" id="GO:0004851">
    <property type="term" value="F:uroporphyrin-III C-methyltransferase activity"/>
    <property type="evidence" value="ECO:0007669"/>
    <property type="project" value="UniProtKB-UniRule"/>
</dbReference>
<dbReference type="GO" id="GO:0009236">
    <property type="term" value="P:cobalamin biosynthetic process"/>
    <property type="evidence" value="ECO:0007669"/>
    <property type="project" value="UniProtKB-UniRule"/>
</dbReference>
<dbReference type="GO" id="GO:0032259">
    <property type="term" value="P:methylation"/>
    <property type="evidence" value="ECO:0007669"/>
    <property type="project" value="UniProtKB-KW"/>
</dbReference>
<dbReference type="GO" id="GO:0019354">
    <property type="term" value="P:siroheme biosynthetic process"/>
    <property type="evidence" value="ECO:0007669"/>
    <property type="project" value="UniProtKB-UniRule"/>
</dbReference>
<dbReference type="CDD" id="cd11642">
    <property type="entry name" value="SUMT"/>
    <property type="match status" value="1"/>
</dbReference>
<dbReference type="FunFam" id="1.10.8.210:FF:000001">
    <property type="entry name" value="Siroheme synthase"/>
    <property type="match status" value="1"/>
</dbReference>
<dbReference type="FunFam" id="3.30.160.110:FF:000001">
    <property type="entry name" value="Siroheme synthase"/>
    <property type="match status" value="1"/>
</dbReference>
<dbReference type="FunFam" id="3.30.950.10:FF:000001">
    <property type="entry name" value="Siroheme synthase"/>
    <property type="match status" value="1"/>
</dbReference>
<dbReference type="FunFam" id="3.40.1010.10:FF:000001">
    <property type="entry name" value="Siroheme synthase"/>
    <property type="match status" value="1"/>
</dbReference>
<dbReference type="FunFam" id="3.40.50.720:FF:000092">
    <property type="entry name" value="Siroheme synthase"/>
    <property type="match status" value="1"/>
</dbReference>
<dbReference type="Gene3D" id="3.40.1010.10">
    <property type="entry name" value="Cobalt-precorrin-4 Transmethylase, Domain 1"/>
    <property type="match status" value="1"/>
</dbReference>
<dbReference type="Gene3D" id="3.30.950.10">
    <property type="entry name" value="Methyltransferase, Cobalt-precorrin-4 Transmethylase, Domain 2"/>
    <property type="match status" value="1"/>
</dbReference>
<dbReference type="Gene3D" id="3.40.50.720">
    <property type="entry name" value="NAD(P)-binding Rossmann-like Domain"/>
    <property type="match status" value="1"/>
</dbReference>
<dbReference type="Gene3D" id="1.10.8.210">
    <property type="entry name" value="Sirohaem synthase, dimerisation domain"/>
    <property type="match status" value="1"/>
</dbReference>
<dbReference type="Gene3D" id="3.30.160.110">
    <property type="entry name" value="Siroheme synthase, domain 2"/>
    <property type="match status" value="1"/>
</dbReference>
<dbReference type="HAMAP" id="MF_01646">
    <property type="entry name" value="Siroheme_synth"/>
    <property type="match status" value="1"/>
</dbReference>
<dbReference type="InterPro" id="IPR000878">
    <property type="entry name" value="4pyrrol_Mease"/>
</dbReference>
<dbReference type="InterPro" id="IPR035996">
    <property type="entry name" value="4pyrrol_Methylase_sf"/>
</dbReference>
<dbReference type="InterPro" id="IPR014777">
    <property type="entry name" value="4pyrrole_Mease_sub1"/>
</dbReference>
<dbReference type="InterPro" id="IPR014776">
    <property type="entry name" value="4pyrrole_Mease_sub2"/>
</dbReference>
<dbReference type="InterPro" id="IPR006366">
    <property type="entry name" value="CobA/CysG_C"/>
</dbReference>
<dbReference type="InterPro" id="IPR036291">
    <property type="entry name" value="NAD(P)-bd_dom_sf"/>
</dbReference>
<dbReference type="InterPro" id="IPR050161">
    <property type="entry name" value="Siro_Cobalamin_biosynth"/>
</dbReference>
<dbReference type="InterPro" id="IPR037115">
    <property type="entry name" value="Sirohaem_synt_dimer_dom_sf"/>
</dbReference>
<dbReference type="InterPro" id="IPR012409">
    <property type="entry name" value="Sirohaem_synth"/>
</dbReference>
<dbReference type="InterPro" id="IPR028281">
    <property type="entry name" value="Sirohaem_synthase_central"/>
</dbReference>
<dbReference type="InterPro" id="IPR019478">
    <property type="entry name" value="Sirohaem_synthase_dimer_dom"/>
</dbReference>
<dbReference type="InterPro" id="IPR006367">
    <property type="entry name" value="Sirohaem_synthase_N"/>
</dbReference>
<dbReference type="InterPro" id="IPR003043">
    <property type="entry name" value="Uropor_MeTrfase_CS"/>
</dbReference>
<dbReference type="NCBIfam" id="TIGR01469">
    <property type="entry name" value="cobA_cysG_Cterm"/>
    <property type="match status" value="1"/>
</dbReference>
<dbReference type="NCBIfam" id="TIGR01470">
    <property type="entry name" value="cysG_Nterm"/>
    <property type="match status" value="1"/>
</dbReference>
<dbReference type="NCBIfam" id="NF004790">
    <property type="entry name" value="PRK06136.1"/>
    <property type="match status" value="1"/>
</dbReference>
<dbReference type="NCBIfam" id="NF007922">
    <property type="entry name" value="PRK10637.1"/>
    <property type="match status" value="1"/>
</dbReference>
<dbReference type="PANTHER" id="PTHR45790:SF1">
    <property type="entry name" value="SIROHEME SYNTHASE"/>
    <property type="match status" value="1"/>
</dbReference>
<dbReference type="PANTHER" id="PTHR45790">
    <property type="entry name" value="SIROHEME SYNTHASE-RELATED"/>
    <property type="match status" value="1"/>
</dbReference>
<dbReference type="Pfam" id="PF10414">
    <property type="entry name" value="CysG_dimeriser"/>
    <property type="match status" value="1"/>
</dbReference>
<dbReference type="Pfam" id="PF13241">
    <property type="entry name" value="NAD_binding_7"/>
    <property type="match status" value="1"/>
</dbReference>
<dbReference type="Pfam" id="PF14824">
    <property type="entry name" value="Sirohm_synth_M"/>
    <property type="match status" value="1"/>
</dbReference>
<dbReference type="Pfam" id="PF00590">
    <property type="entry name" value="TP_methylase"/>
    <property type="match status" value="1"/>
</dbReference>
<dbReference type="PIRSF" id="PIRSF036426">
    <property type="entry name" value="Sirohaem_synth"/>
    <property type="match status" value="1"/>
</dbReference>
<dbReference type="SUPFAM" id="SSF51735">
    <property type="entry name" value="NAD(P)-binding Rossmann-fold domains"/>
    <property type="match status" value="1"/>
</dbReference>
<dbReference type="SUPFAM" id="SSF75615">
    <property type="entry name" value="Siroheme synthase middle domains-like"/>
    <property type="match status" value="1"/>
</dbReference>
<dbReference type="SUPFAM" id="SSF53790">
    <property type="entry name" value="Tetrapyrrole methylase"/>
    <property type="match status" value="1"/>
</dbReference>
<dbReference type="PROSITE" id="PS00839">
    <property type="entry name" value="SUMT_1"/>
    <property type="match status" value="1"/>
</dbReference>
<dbReference type="PROSITE" id="PS00840">
    <property type="entry name" value="SUMT_2"/>
    <property type="match status" value="1"/>
</dbReference>
<keyword id="KW-0169">Cobalamin biosynthesis</keyword>
<keyword id="KW-0456">Lyase</keyword>
<keyword id="KW-0489">Methyltransferase</keyword>
<keyword id="KW-0511">Multifunctional enzyme</keyword>
<keyword id="KW-0520">NAD</keyword>
<keyword id="KW-0560">Oxidoreductase</keyword>
<keyword id="KW-0597">Phosphoprotein</keyword>
<keyword id="KW-0627">Porphyrin biosynthesis</keyword>
<keyword id="KW-1185">Reference proteome</keyword>
<keyword id="KW-0949">S-adenosyl-L-methionine</keyword>
<keyword id="KW-0808">Transferase</keyword>
<sequence length="457" mass="49981">MDHLPIFCQLRDRDCLIVGGGDVAERKARLLLDAGARLTVNALAFIPQFTAWADAGMLTLVEGPFDESLLDTCWLAIAATDDDALNQRVSEAAEARRIFCNVVDAPKAASFIMPSIIDRSPLMVAVSSGGTSPVLARLLREKLESLLPLHLGQVAKYAGQLRGRVKQQFATMSERRRFWEKLFVNDRLAQSLANNDQKAITETTEQLINEPLDHRGEVVLVGAGPGDAGLLTLKGLQQIQQADVVVYDRLVSDDIMNLVRRDADRVFVGKRAGYHCVPQEEINQILLREAQKGKRVVRLKGGDPFIFGRGGEELETLCNAGIPFSVVPGITAASGCSAYSGIPLTHRDYAQSVRLITGHLKTGGELDWENLAAEKQTLVFYMGLNQAATIQQKLIEHGMPGEMPVAIVENGTAVTQRVIDGTLTQLGELAQQMNSPSLIIIGRVVGLRDKLNWFSNH</sequence>
<proteinExistence type="inferred from homology"/>
<gene>
    <name evidence="1" type="primary">cysG</name>
    <name type="ordered locus">EcE24377A_3838</name>
</gene>
<evidence type="ECO:0000255" key="1">
    <source>
        <dbReference type="HAMAP-Rule" id="MF_01646"/>
    </source>
</evidence>
<reference key="1">
    <citation type="journal article" date="2008" name="J. Bacteriol.">
        <title>The pangenome structure of Escherichia coli: comparative genomic analysis of E. coli commensal and pathogenic isolates.</title>
        <authorList>
            <person name="Rasko D.A."/>
            <person name="Rosovitz M.J."/>
            <person name="Myers G.S.A."/>
            <person name="Mongodin E.F."/>
            <person name="Fricke W.F."/>
            <person name="Gajer P."/>
            <person name="Crabtree J."/>
            <person name="Sebaihia M."/>
            <person name="Thomson N.R."/>
            <person name="Chaudhuri R."/>
            <person name="Henderson I.R."/>
            <person name="Sperandio V."/>
            <person name="Ravel J."/>
        </authorList>
    </citation>
    <scope>NUCLEOTIDE SEQUENCE [LARGE SCALE GENOMIC DNA]</scope>
    <source>
        <strain>E24377A / ETEC</strain>
    </source>
</reference>
<comment type="function">
    <text evidence="1">Multifunctional enzyme that catalyzes the SAM-dependent methylations of uroporphyrinogen III at position C-2 and C-7 to form precorrin-2 via precorrin-1. Then it catalyzes the NAD-dependent ring dehydrogenation of precorrin-2 to yield sirohydrochlorin. Finally, it catalyzes the ferrochelation of sirohydrochlorin to yield siroheme.</text>
</comment>
<comment type="catalytic activity">
    <reaction evidence="1">
        <text>uroporphyrinogen III + 2 S-adenosyl-L-methionine = precorrin-2 + 2 S-adenosyl-L-homocysteine + H(+)</text>
        <dbReference type="Rhea" id="RHEA:32459"/>
        <dbReference type="ChEBI" id="CHEBI:15378"/>
        <dbReference type="ChEBI" id="CHEBI:57308"/>
        <dbReference type="ChEBI" id="CHEBI:57856"/>
        <dbReference type="ChEBI" id="CHEBI:58827"/>
        <dbReference type="ChEBI" id="CHEBI:59789"/>
        <dbReference type="EC" id="2.1.1.107"/>
    </reaction>
</comment>
<comment type="catalytic activity">
    <reaction evidence="1">
        <text>precorrin-2 + NAD(+) = sirohydrochlorin + NADH + 2 H(+)</text>
        <dbReference type="Rhea" id="RHEA:15613"/>
        <dbReference type="ChEBI" id="CHEBI:15378"/>
        <dbReference type="ChEBI" id="CHEBI:57540"/>
        <dbReference type="ChEBI" id="CHEBI:57945"/>
        <dbReference type="ChEBI" id="CHEBI:58351"/>
        <dbReference type="ChEBI" id="CHEBI:58827"/>
        <dbReference type="EC" id="1.3.1.76"/>
    </reaction>
</comment>
<comment type="catalytic activity">
    <reaction evidence="1">
        <text>siroheme + 2 H(+) = sirohydrochlorin + Fe(2+)</text>
        <dbReference type="Rhea" id="RHEA:24360"/>
        <dbReference type="ChEBI" id="CHEBI:15378"/>
        <dbReference type="ChEBI" id="CHEBI:29033"/>
        <dbReference type="ChEBI" id="CHEBI:58351"/>
        <dbReference type="ChEBI" id="CHEBI:60052"/>
        <dbReference type="EC" id="4.99.1.4"/>
    </reaction>
</comment>
<comment type="pathway">
    <text evidence="1">Cofactor biosynthesis; adenosylcobalamin biosynthesis; precorrin-2 from uroporphyrinogen III: step 1/1.</text>
</comment>
<comment type="pathway">
    <text evidence="1">Cofactor biosynthesis; adenosylcobalamin biosynthesis; sirohydrochlorin from precorrin-2: step 1/1.</text>
</comment>
<comment type="pathway">
    <text evidence="1">Porphyrin-containing compound metabolism; siroheme biosynthesis; precorrin-2 from uroporphyrinogen III: step 1/1.</text>
</comment>
<comment type="pathway">
    <text evidence="1">Porphyrin-containing compound metabolism; siroheme biosynthesis; siroheme from sirohydrochlorin: step 1/1.</text>
</comment>
<comment type="pathway">
    <text evidence="1">Porphyrin-containing compound metabolism; siroheme biosynthesis; sirohydrochlorin from precorrin-2: step 1/1.</text>
</comment>
<comment type="similarity">
    <text evidence="1">In the N-terminal section; belongs to the precorrin-2 dehydrogenase / sirohydrochlorin ferrochelatase family.</text>
</comment>
<comment type="similarity">
    <text evidence="1">In the C-terminal section; belongs to the precorrin methyltransferase family.</text>
</comment>
<name>CYSG_ECO24</name>
<protein>
    <recommendedName>
        <fullName evidence="1">Siroheme synthase</fullName>
    </recommendedName>
    <domain>
        <recommendedName>
            <fullName evidence="1">Uroporphyrinogen-III C-methyltransferase</fullName>
            <shortName evidence="1">Urogen III methylase</shortName>
            <ecNumber evidence="1">2.1.1.107</ecNumber>
        </recommendedName>
        <alternativeName>
            <fullName evidence="1">SUMT</fullName>
        </alternativeName>
        <alternativeName>
            <fullName evidence="1">Uroporphyrinogen III methylase</fullName>
            <shortName evidence="1">UROM</shortName>
        </alternativeName>
    </domain>
    <domain>
        <recommendedName>
            <fullName evidence="1">Precorrin-2 dehydrogenase</fullName>
            <ecNumber evidence="1">1.3.1.76</ecNumber>
        </recommendedName>
    </domain>
    <domain>
        <recommendedName>
            <fullName evidence="1">Sirohydrochlorin ferrochelatase</fullName>
            <ecNumber evidence="1">4.99.1.4</ecNumber>
        </recommendedName>
    </domain>
</protein>
<accession>A7ZSP4</accession>